<keyword id="KW-0025">Alternative splicing</keyword>
<keyword id="KW-0150">Chloroplast</keyword>
<keyword id="KW-0507">mRNA processing</keyword>
<keyword id="KW-0508">mRNA splicing</keyword>
<keyword id="KW-0934">Plastid</keyword>
<keyword id="KW-1185">Reference proteome</keyword>
<keyword id="KW-0687">Ribonucleoprotein</keyword>
<keyword id="KW-0694">RNA-binding</keyword>
<keyword id="KW-0809">Transit peptide</keyword>
<keyword id="KW-0820">tRNA-binding</keyword>
<dbReference type="EMBL" id="AB011481">
    <property type="protein sequence ID" value="BAB09443.1"/>
    <property type="molecule type" value="Genomic_DNA"/>
</dbReference>
<dbReference type="EMBL" id="CP002688">
    <property type="protein sequence ID" value="AED94291.1"/>
    <property type="molecule type" value="Genomic_DNA"/>
</dbReference>
<dbReference type="EMBL" id="AK118408">
    <property type="protein sequence ID" value="BAC43017.1"/>
    <property type="molecule type" value="mRNA"/>
</dbReference>
<dbReference type="EMBL" id="BT025030">
    <property type="protein sequence ID" value="ABE02405.1"/>
    <property type="molecule type" value="mRNA"/>
</dbReference>
<dbReference type="RefSeq" id="NP_198645.1">
    <molecule id="Q9FKN4-1"/>
    <property type="nucleotide sequence ID" value="NM_123190.3"/>
</dbReference>
<dbReference type="SMR" id="Q9FKN4"/>
<dbReference type="FunCoup" id="Q9FKN4">
    <property type="interactions" value="716"/>
</dbReference>
<dbReference type="STRING" id="3702.Q9FKN4"/>
<dbReference type="iPTMnet" id="Q9FKN4"/>
<dbReference type="PaxDb" id="3702-AT5G38290.2"/>
<dbReference type="ProteomicsDB" id="224508">
    <molecule id="Q9FKN4-1"/>
</dbReference>
<dbReference type="EnsemblPlants" id="AT5G38290.1">
    <molecule id="Q9FKN4-1"/>
    <property type="protein sequence ID" value="AT5G38290.1"/>
    <property type="gene ID" value="AT5G38290"/>
</dbReference>
<dbReference type="GeneID" id="833811"/>
<dbReference type="Gramene" id="AT5G38290.1">
    <molecule id="Q9FKN4-1"/>
    <property type="protein sequence ID" value="AT5G38290.1"/>
    <property type="gene ID" value="AT5G38290"/>
</dbReference>
<dbReference type="KEGG" id="ath:AT5G38290"/>
<dbReference type="Araport" id="AT5G38290"/>
<dbReference type="TAIR" id="AT5G38290"/>
<dbReference type="eggNOG" id="KOG2255">
    <property type="taxonomic scope" value="Eukaryota"/>
</dbReference>
<dbReference type="HOGENOM" id="CLU_062456_5_0_1"/>
<dbReference type="InParanoid" id="Q9FKN4"/>
<dbReference type="PhylomeDB" id="Q9FKN4"/>
<dbReference type="PRO" id="PR:Q9FKN4"/>
<dbReference type="Proteomes" id="UP000006548">
    <property type="component" value="Chromosome 5"/>
</dbReference>
<dbReference type="ExpressionAtlas" id="Q9FKN4">
    <property type="expression patterns" value="baseline and differential"/>
</dbReference>
<dbReference type="GO" id="GO:0009570">
    <property type="term" value="C:chloroplast stroma"/>
    <property type="evidence" value="ECO:0007669"/>
    <property type="project" value="UniProtKB-SubCell"/>
</dbReference>
<dbReference type="GO" id="GO:1990904">
    <property type="term" value="C:ribonucleoprotein complex"/>
    <property type="evidence" value="ECO:0007669"/>
    <property type="project" value="UniProtKB-KW"/>
</dbReference>
<dbReference type="GO" id="GO:0004045">
    <property type="term" value="F:peptidyl-tRNA hydrolase activity"/>
    <property type="evidence" value="ECO:0007669"/>
    <property type="project" value="InterPro"/>
</dbReference>
<dbReference type="GO" id="GO:0000049">
    <property type="term" value="F:tRNA binding"/>
    <property type="evidence" value="ECO:0007669"/>
    <property type="project" value="UniProtKB-KW"/>
</dbReference>
<dbReference type="GO" id="GO:0006397">
    <property type="term" value="P:mRNA processing"/>
    <property type="evidence" value="ECO:0007669"/>
    <property type="project" value="UniProtKB-KW"/>
</dbReference>
<dbReference type="GO" id="GO:0008380">
    <property type="term" value="P:RNA splicing"/>
    <property type="evidence" value="ECO:0007669"/>
    <property type="project" value="UniProtKB-KW"/>
</dbReference>
<dbReference type="FunFam" id="3.40.50.1470:FF:000001">
    <property type="entry name" value="Peptidyl-tRNA hydrolase"/>
    <property type="match status" value="1"/>
</dbReference>
<dbReference type="Gene3D" id="3.40.50.1470">
    <property type="entry name" value="Peptidyl-tRNA hydrolase"/>
    <property type="match status" value="1"/>
</dbReference>
<dbReference type="HAMAP" id="MF_00083">
    <property type="entry name" value="Pept_tRNA_hydro_bact"/>
    <property type="match status" value="1"/>
</dbReference>
<dbReference type="InterPro" id="IPR001328">
    <property type="entry name" value="Pept_tRNA_hydro"/>
</dbReference>
<dbReference type="InterPro" id="IPR018171">
    <property type="entry name" value="Pept_tRNA_hydro_CS"/>
</dbReference>
<dbReference type="InterPro" id="IPR036416">
    <property type="entry name" value="Pept_tRNA_hydro_sf"/>
</dbReference>
<dbReference type="NCBIfam" id="TIGR00447">
    <property type="entry name" value="pth"/>
    <property type="match status" value="1"/>
</dbReference>
<dbReference type="PANTHER" id="PTHR17224:SF7">
    <property type="entry name" value="CHLOROPLASTIC GROUP IIB INTRON SPLICING FACILITATOR CRS2-A, CHLOROPLASTIC"/>
    <property type="match status" value="1"/>
</dbReference>
<dbReference type="PANTHER" id="PTHR17224">
    <property type="entry name" value="PEPTIDYL-TRNA HYDROLASE"/>
    <property type="match status" value="1"/>
</dbReference>
<dbReference type="Pfam" id="PF01195">
    <property type="entry name" value="Pept_tRNA_hydro"/>
    <property type="match status" value="1"/>
</dbReference>
<dbReference type="SUPFAM" id="SSF53178">
    <property type="entry name" value="Peptidyl-tRNA hydrolase-like"/>
    <property type="match status" value="1"/>
</dbReference>
<dbReference type="PROSITE" id="PS01195">
    <property type="entry name" value="PEPT_TRNA_HYDROL_1"/>
    <property type="match status" value="1"/>
</dbReference>
<dbReference type="PROSITE" id="PS01196">
    <property type="entry name" value="PEPT_TRNA_HYDROL_2"/>
    <property type="match status" value="1"/>
</dbReference>
<reference key="1">
    <citation type="journal article" date="1998" name="DNA Res.">
        <title>Structural analysis of Arabidopsis thaliana chromosome 5. V. Sequence features of the regions of 1,381,565 bp covered by twenty one physically assigned P1 and TAC clones.</title>
        <authorList>
            <person name="Kaneko T."/>
            <person name="Kotani H."/>
            <person name="Nakamura Y."/>
            <person name="Sato S."/>
            <person name="Asamizu E."/>
            <person name="Miyajima N."/>
            <person name="Tabata S."/>
        </authorList>
    </citation>
    <scope>NUCLEOTIDE SEQUENCE [LARGE SCALE GENOMIC DNA]</scope>
    <source>
        <strain>cv. Columbia</strain>
    </source>
</reference>
<reference key="2">
    <citation type="journal article" date="2017" name="Plant J.">
        <title>Araport11: a complete reannotation of the Arabidopsis thaliana reference genome.</title>
        <authorList>
            <person name="Cheng C.Y."/>
            <person name="Krishnakumar V."/>
            <person name="Chan A.P."/>
            <person name="Thibaud-Nissen F."/>
            <person name="Schobel S."/>
            <person name="Town C.D."/>
        </authorList>
    </citation>
    <scope>GENOME REANNOTATION</scope>
    <source>
        <strain>cv. Columbia</strain>
    </source>
</reference>
<reference key="3">
    <citation type="journal article" date="2002" name="Science">
        <title>Functional annotation of a full-length Arabidopsis cDNA collection.</title>
        <authorList>
            <person name="Seki M."/>
            <person name="Narusaka M."/>
            <person name="Kamiya A."/>
            <person name="Ishida J."/>
            <person name="Satou M."/>
            <person name="Sakurai T."/>
            <person name="Nakajima M."/>
            <person name="Enju A."/>
            <person name="Akiyama K."/>
            <person name="Oono Y."/>
            <person name="Muramatsu M."/>
            <person name="Hayashizaki Y."/>
            <person name="Kawai J."/>
            <person name="Carninci P."/>
            <person name="Itoh M."/>
            <person name="Ishii Y."/>
            <person name="Arakawa T."/>
            <person name="Shibata K."/>
            <person name="Shinagawa A."/>
            <person name="Shinozaki K."/>
        </authorList>
    </citation>
    <scope>NUCLEOTIDE SEQUENCE [LARGE SCALE MRNA]</scope>
    <source>
        <strain>cv. Columbia</strain>
    </source>
</reference>
<reference key="4">
    <citation type="submission" date="2006-04" db="EMBL/GenBank/DDBJ databases">
        <title>Arabidopsis ORF clones.</title>
        <authorList>
            <person name="Shinn P."/>
            <person name="Chen H."/>
            <person name="Kim C.J."/>
            <person name="Ecker J.R."/>
        </authorList>
    </citation>
    <scope>NUCLEOTIDE SEQUENCE [LARGE SCALE MRNA]</scope>
    <source>
        <strain>cv. Columbia</strain>
    </source>
</reference>
<organism>
    <name type="scientific">Arabidopsis thaliana</name>
    <name type="common">Mouse-ear cress</name>
    <dbReference type="NCBI Taxonomy" id="3702"/>
    <lineage>
        <taxon>Eukaryota</taxon>
        <taxon>Viridiplantae</taxon>
        <taxon>Streptophyta</taxon>
        <taxon>Embryophyta</taxon>
        <taxon>Tracheophyta</taxon>
        <taxon>Spermatophyta</taxon>
        <taxon>Magnoliopsida</taxon>
        <taxon>eudicotyledons</taxon>
        <taxon>Gunneridae</taxon>
        <taxon>Pentapetalae</taxon>
        <taxon>rosids</taxon>
        <taxon>malvids</taxon>
        <taxon>Brassicales</taxon>
        <taxon>Brassicaceae</taxon>
        <taxon>Camelineae</taxon>
        <taxon>Arabidopsis</taxon>
    </lineage>
</organism>
<proteinExistence type="evidence at transcript level"/>
<feature type="transit peptide" description="Chloroplast" evidence="3">
    <location>
        <begin position="1"/>
        <end position="34"/>
    </location>
</feature>
<feature type="chain" id="PRO_0000280530" description="Chloroplastic group IIB intron splicing facilitator CRS2-A, chloroplastic">
    <location>
        <begin position="35"/>
        <end position="246"/>
    </location>
</feature>
<feature type="active site" description="Proton acceptor" evidence="2">
    <location>
        <position position="69"/>
    </location>
</feature>
<feature type="binding site" evidence="2">
    <location>
        <position position="64"/>
    </location>
    <ligand>
        <name>tRNA</name>
        <dbReference type="ChEBI" id="CHEBI:17843"/>
    </ligand>
</feature>
<feature type="binding site" evidence="2">
    <location>
        <position position="114"/>
    </location>
    <ligand>
        <name>tRNA</name>
        <dbReference type="ChEBI" id="CHEBI:17843"/>
    </ligand>
</feature>
<feature type="binding site" evidence="2">
    <location>
        <position position="116"/>
    </location>
    <ligand>
        <name>tRNA</name>
        <dbReference type="ChEBI" id="CHEBI:17843"/>
    </ligand>
</feature>
<feature type="binding site" evidence="2">
    <location>
        <position position="162"/>
    </location>
    <ligand>
        <name>tRNA</name>
        <dbReference type="ChEBI" id="CHEBI:17843"/>
    </ligand>
</feature>
<feature type="site" description="Stabilizes the basic form of H active site to accept a proton" evidence="2">
    <location>
        <position position="141"/>
    </location>
</feature>
<feature type="sequence conflict" description="In Ref. 3; BAC43017." evidence="4" ref="3">
    <original>M</original>
    <variation>L</variation>
    <location>
        <position position="143"/>
    </location>
</feature>
<gene>
    <name type="primary">CRS2A</name>
    <name type="ordered locus">At5g38290</name>
    <name type="ORF">MSI17.10</name>
</gene>
<protein>
    <recommendedName>
        <fullName>Chloroplastic group IIB intron splicing facilitator CRS2-A, chloroplastic</fullName>
    </recommendedName>
    <alternativeName>
        <fullName>CRS2-like protein A</fullName>
    </alternativeName>
    <alternativeName>
        <fullName>Chloroplastic RNA splicing factor 2-A</fullName>
    </alternativeName>
</protein>
<accession>Q9FKN4</accession>
<accession>Q8GX67</accession>
<name>CRS2A_ARATH</name>
<comment type="function">
    <text evidence="1">Required for the splicing of group IIB introns in chloroplasts.</text>
</comment>
<comment type="subunit">
    <text evidence="1">Part of large ribonucleo-protein complexes that include group IIB introns and either CAF1 or CAF2.</text>
</comment>
<comment type="subcellular location">
    <subcellularLocation>
        <location evidence="1">Plastid</location>
        <location evidence="1">Chloroplast stroma</location>
    </subcellularLocation>
</comment>
<comment type="alternative products">
    <event type="alternative splicing"/>
    <isoform>
        <id>Q9FKN4-1</id>
        <name>1</name>
        <sequence type="displayed"/>
    </isoform>
    <text>A number of isoforms are produced. According to EST sequences.</text>
</comment>
<comment type="similarity">
    <text evidence="4">Belongs to the PTH family. CRS2 subfamily.</text>
</comment>
<evidence type="ECO:0000250" key="1"/>
<evidence type="ECO:0000250" key="2">
    <source>
        <dbReference type="UniProtKB" id="P0A7D1"/>
    </source>
</evidence>
<evidence type="ECO:0000255" key="3"/>
<evidence type="ECO:0000305" key="4"/>
<sequence>MFCASSSPITSPLYPKAYKFSQTKSNSKRFSSLRASLPVSDNKLLKFEYTPWLIVGLGNPGLKYYGTRHNIGFEMIDHIARATDISMNTIQSKALVGIGSVGEVPILLVKPQGYMNFSGESVGPLAAYYQIPLRHILMIYDDMGLSNGVLRLQPKGGHSQHNGLKNVTEHLNGCRGYPRLSIGIGNPPGNMDMKAFLLQKFSPLERKQMDEGLEQGVEGVKTLVEEGFSDSISRFNLGQKYKFHKV</sequence>